<protein>
    <recommendedName>
        <fullName>N-lysine methyltransferase SMYD2</fullName>
        <ecNumber evidence="2">2.1.1.-</ecNumber>
    </recommendedName>
    <alternativeName>
        <fullName>Histone methyltransferase SMYD2</fullName>
        <ecNumber evidence="2">2.1.1.354</ecNumber>
    </alternativeName>
    <alternativeName>
        <fullName>SET and MYND domain-containing protein 2</fullName>
    </alternativeName>
</protein>
<organism>
    <name type="scientific">Bos taurus</name>
    <name type="common">Bovine</name>
    <dbReference type="NCBI Taxonomy" id="9913"/>
    <lineage>
        <taxon>Eukaryota</taxon>
        <taxon>Metazoa</taxon>
        <taxon>Chordata</taxon>
        <taxon>Craniata</taxon>
        <taxon>Vertebrata</taxon>
        <taxon>Euteleostomi</taxon>
        <taxon>Mammalia</taxon>
        <taxon>Eutheria</taxon>
        <taxon>Laurasiatheria</taxon>
        <taxon>Artiodactyla</taxon>
        <taxon>Ruminantia</taxon>
        <taxon>Pecora</taxon>
        <taxon>Bovidae</taxon>
        <taxon>Bovinae</taxon>
        <taxon>Bos</taxon>
    </lineage>
</organism>
<evidence type="ECO:0000250" key="1"/>
<evidence type="ECO:0000250" key="2">
    <source>
        <dbReference type="UniProtKB" id="Q9NRG4"/>
    </source>
</evidence>
<evidence type="ECO:0000255" key="3">
    <source>
        <dbReference type="PROSITE-ProRule" id="PRU00134"/>
    </source>
</evidence>
<evidence type="ECO:0000255" key="4">
    <source>
        <dbReference type="PROSITE-ProRule" id="PRU00190"/>
    </source>
</evidence>
<sequence length="433" mass="49860">MRAEGDGGLERFCSPGKGRGLRALQPFQVGDLLFSCPAYAYVLTVSERGNHCEFCFARKEGLSKCGRCKQAFYCNVECQREDWPMHKLECSPMVVFGENWNPSETVRLTARILAKQKIHPERTPSEKLLAVKEFESHLDKLDNEKRDLIQSDIAALHHFYSKHLEFPDNDSLVVLFAQVNCNGFTIEDEELSHLGSAIFPDVALMNHSCCPNVIVTYKGTLAEVRAVQEIHPGEEVFTSYIDLLYPTEDRNDRLRDSYFFTCECQECTTKDKDKAKVEIRKLNDPPKAETIRDMVRYARNVIEEFRRAKHYKSPSELLEICELSQEKMSCVFEDSNVYMLHMMYQAMGVCLYMQDWEGALRYGQKIIQPYSKHYPLYSLNVASMWLKLGRLYMGLENKAAGERALKKAIAIMEVAHGKDHPYISEIKQEIESH</sequence>
<proteinExistence type="evidence at transcript level"/>
<dbReference type="EC" id="2.1.1.-" evidence="2"/>
<dbReference type="EC" id="2.1.1.354" evidence="2"/>
<dbReference type="EMBL" id="BC120364">
    <property type="protein sequence ID" value="AAI20365.1"/>
    <property type="molecule type" value="mRNA"/>
</dbReference>
<dbReference type="RefSeq" id="NP_001069832.1">
    <property type="nucleotide sequence ID" value="NM_001076364.1"/>
</dbReference>
<dbReference type="SMR" id="Q0P585"/>
<dbReference type="FunCoup" id="Q0P585">
    <property type="interactions" value="156"/>
</dbReference>
<dbReference type="STRING" id="9913.ENSBTAP00000017516"/>
<dbReference type="PaxDb" id="9913-ENSBTAP00000017516"/>
<dbReference type="GeneID" id="615229"/>
<dbReference type="KEGG" id="bta:615229"/>
<dbReference type="CTD" id="56950"/>
<dbReference type="VEuPathDB" id="HostDB:ENSBTAG00000013166"/>
<dbReference type="eggNOG" id="KOG2084">
    <property type="taxonomic scope" value="Eukaryota"/>
</dbReference>
<dbReference type="HOGENOM" id="CLU_018406_0_0_1"/>
<dbReference type="InParanoid" id="Q0P585"/>
<dbReference type="OMA" id="HYKSPGE"/>
<dbReference type="OrthoDB" id="5945798at2759"/>
<dbReference type="TreeFam" id="TF106487"/>
<dbReference type="Reactome" id="R-BTA-3214841">
    <property type="pathway name" value="PKMTs methylate histone lysines"/>
</dbReference>
<dbReference type="Reactome" id="R-BTA-6804760">
    <property type="pathway name" value="Regulation of TP53 Activity through Methylation"/>
</dbReference>
<dbReference type="Proteomes" id="UP000009136">
    <property type="component" value="Chromosome 16"/>
</dbReference>
<dbReference type="Bgee" id="ENSBTAG00000013166">
    <property type="expression patterns" value="Expressed in biceps femoris and 105 other cell types or tissues"/>
</dbReference>
<dbReference type="GO" id="GO:0005737">
    <property type="term" value="C:cytoplasm"/>
    <property type="evidence" value="ECO:0000250"/>
    <property type="project" value="UniProtKB"/>
</dbReference>
<dbReference type="GO" id="GO:0005829">
    <property type="term" value="C:cytosol"/>
    <property type="evidence" value="ECO:0000250"/>
    <property type="project" value="UniProtKB"/>
</dbReference>
<dbReference type="GO" id="GO:0005634">
    <property type="term" value="C:nucleus"/>
    <property type="evidence" value="ECO:0000250"/>
    <property type="project" value="UniProtKB"/>
</dbReference>
<dbReference type="GO" id="GO:0046975">
    <property type="term" value="F:histone H3K36 methyltransferase activity"/>
    <property type="evidence" value="ECO:0000250"/>
    <property type="project" value="UniProtKB"/>
</dbReference>
<dbReference type="GO" id="GO:0140999">
    <property type="term" value="F:histone H3K4 trimethyltransferase activity"/>
    <property type="evidence" value="ECO:0007669"/>
    <property type="project" value="UniProtKB-EC"/>
</dbReference>
<dbReference type="GO" id="GO:0016279">
    <property type="term" value="F:protein-lysine N-methyltransferase activity"/>
    <property type="evidence" value="ECO:0000250"/>
    <property type="project" value="UniProtKB"/>
</dbReference>
<dbReference type="GO" id="GO:0000993">
    <property type="term" value="F:RNA polymerase II complex binding"/>
    <property type="evidence" value="ECO:0000250"/>
    <property type="project" value="UniProtKB"/>
</dbReference>
<dbReference type="GO" id="GO:0008270">
    <property type="term" value="F:zinc ion binding"/>
    <property type="evidence" value="ECO:0007669"/>
    <property type="project" value="UniProtKB-KW"/>
</dbReference>
<dbReference type="GO" id="GO:0008285">
    <property type="term" value="P:negative regulation of cell population proliferation"/>
    <property type="evidence" value="ECO:0000250"/>
    <property type="project" value="UniProtKB"/>
</dbReference>
<dbReference type="GO" id="GO:0000122">
    <property type="term" value="P:negative regulation of transcription by RNA polymerase II"/>
    <property type="evidence" value="ECO:0000250"/>
    <property type="project" value="UniProtKB"/>
</dbReference>
<dbReference type="GO" id="GO:0018027">
    <property type="term" value="P:peptidyl-lysine dimethylation"/>
    <property type="evidence" value="ECO:0000250"/>
    <property type="project" value="UniProtKB"/>
</dbReference>
<dbReference type="GO" id="GO:0018026">
    <property type="term" value="P:peptidyl-lysine monomethylation"/>
    <property type="evidence" value="ECO:0000250"/>
    <property type="project" value="UniProtKB"/>
</dbReference>
<dbReference type="GO" id="GO:0043516">
    <property type="term" value="P:regulation of DNA damage response, signal transduction by p53 class mediator"/>
    <property type="evidence" value="ECO:0000250"/>
    <property type="project" value="UniProtKB"/>
</dbReference>
<dbReference type="CDD" id="cd19202">
    <property type="entry name" value="SET_SMYD2"/>
    <property type="match status" value="1"/>
</dbReference>
<dbReference type="FunFam" id="2.170.270.10:FF:000013">
    <property type="entry name" value="Histone-lysine N-methyltransferase SMYD1 isoform 1"/>
    <property type="match status" value="1"/>
</dbReference>
<dbReference type="FunFam" id="1.10.220.160:FF:000001">
    <property type="entry name" value="N-lysine methyltransferase SMYD2 isoform X1"/>
    <property type="match status" value="1"/>
</dbReference>
<dbReference type="FunFam" id="1.25.40.970:FF:000002">
    <property type="entry name" value="N-lysine methyltransferase SMYD2 isoform X1"/>
    <property type="match status" value="1"/>
</dbReference>
<dbReference type="FunFam" id="6.10.140.2220:FF:000013">
    <property type="entry name" value="N-lysine methyltransferase SMYD2 isoform X1"/>
    <property type="match status" value="1"/>
</dbReference>
<dbReference type="FunFam" id="1.25.40.10:FF:000249">
    <property type="entry name" value="N-lysine methyltransferase SMYD2 isoform X2"/>
    <property type="match status" value="1"/>
</dbReference>
<dbReference type="Gene3D" id="1.10.220.160">
    <property type="match status" value="1"/>
</dbReference>
<dbReference type="Gene3D" id="1.25.40.970">
    <property type="match status" value="1"/>
</dbReference>
<dbReference type="Gene3D" id="6.10.140.2220">
    <property type="match status" value="1"/>
</dbReference>
<dbReference type="Gene3D" id="2.170.270.10">
    <property type="entry name" value="SET domain"/>
    <property type="match status" value="1"/>
</dbReference>
<dbReference type="Gene3D" id="1.25.40.10">
    <property type="entry name" value="Tetratricopeptide repeat domain"/>
    <property type="match status" value="1"/>
</dbReference>
<dbReference type="InterPro" id="IPR050869">
    <property type="entry name" value="H3K4_H4K5_MeTrfase"/>
</dbReference>
<dbReference type="InterPro" id="IPR001214">
    <property type="entry name" value="SET_dom"/>
</dbReference>
<dbReference type="InterPro" id="IPR046341">
    <property type="entry name" value="SET_dom_sf"/>
</dbReference>
<dbReference type="InterPro" id="IPR044419">
    <property type="entry name" value="SMYD2_SET"/>
</dbReference>
<dbReference type="InterPro" id="IPR011990">
    <property type="entry name" value="TPR-like_helical_dom_sf"/>
</dbReference>
<dbReference type="InterPro" id="IPR002893">
    <property type="entry name" value="Znf_MYND"/>
</dbReference>
<dbReference type="PANTHER" id="PTHR12197">
    <property type="entry name" value="HISTONE-LYSINE N-METHYLTRANSFERASE SMYD"/>
    <property type="match status" value="1"/>
</dbReference>
<dbReference type="PANTHER" id="PTHR12197:SF193">
    <property type="entry name" value="N-LYSINE METHYLTRANSFERASE SMYD2"/>
    <property type="match status" value="1"/>
</dbReference>
<dbReference type="Pfam" id="PF00856">
    <property type="entry name" value="SET"/>
    <property type="match status" value="1"/>
</dbReference>
<dbReference type="Pfam" id="PF01753">
    <property type="entry name" value="zf-MYND"/>
    <property type="match status" value="1"/>
</dbReference>
<dbReference type="SMART" id="SM00317">
    <property type="entry name" value="SET"/>
    <property type="match status" value="1"/>
</dbReference>
<dbReference type="SUPFAM" id="SSF82199">
    <property type="entry name" value="SET domain"/>
    <property type="match status" value="1"/>
</dbReference>
<dbReference type="SUPFAM" id="SSF48452">
    <property type="entry name" value="TPR-like"/>
    <property type="match status" value="1"/>
</dbReference>
<dbReference type="PROSITE" id="PS50280">
    <property type="entry name" value="SET"/>
    <property type="match status" value="1"/>
</dbReference>
<dbReference type="PROSITE" id="PS01360">
    <property type="entry name" value="ZF_MYND_1"/>
    <property type="match status" value="1"/>
</dbReference>
<dbReference type="PROSITE" id="PS50865">
    <property type="entry name" value="ZF_MYND_2"/>
    <property type="match status" value="1"/>
</dbReference>
<gene>
    <name type="primary">SMYD2</name>
</gene>
<feature type="chain" id="PRO_0000405845" description="N-lysine methyltransferase SMYD2">
    <location>
        <begin position="1"/>
        <end position="433"/>
    </location>
</feature>
<feature type="domain" description="SET" evidence="4">
    <location>
        <begin position="7"/>
        <end position="241"/>
    </location>
</feature>
<feature type="zinc finger region" description="MYND-type" evidence="3">
    <location>
        <begin position="52"/>
        <end position="90"/>
    </location>
</feature>
<feature type="binding site" evidence="1">
    <location>
        <begin position="17"/>
        <end position="19"/>
    </location>
    <ligand>
        <name>S-adenosyl-L-methionine</name>
        <dbReference type="ChEBI" id="CHEBI:59789"/>
    </ligand>
</feature>
<feature type="binding site" evidence="3">
    <location>
        <position position="52"/>
    </location>
    <ligand>
        <name>Zn(2+)</name>
        <dbReference type="ChEBI" id="CHEBI:29105"/>
        <label>1</label>
    </ligand>
</feature>
<feature type="binding site" evidence="3">
    <location>
        <position position="55"/>
    </location>
    <ligand>
        <name>Zn(2+)</name>
        <dbReference type="ChEBI" id="CHEBI:29105"/>
        <label>1</label>
    </ligand>
</feature>
<feature type="binding site" evidence="3">
    <location>
        <position position="65"/>
    </location>
    <ligand>
        <name>Zn(2+)</name>
        <dbReference type="ChEBI" id="CHEBI:29105"/>
        <label>2</label>
    </ligand>
</feature>
<feature type="binding site" evidence="3">
    <location>
        <position position="68"/>
    </location>
    <ligand>
        <name>Zn(2+)</name>
        <dbReference type="ChEBI" id="CHEBI:29105"/>
        <label>2</label>
    </ligand>
</feature>
<feature type="binding site" evidence="3">
    <location>
        <position position="74"/>
    </location>
    <ligand>
        <name>Zn(2+)</name>
        <dbReference type="ChEBI" id="CHEBI:29105"/>
        <label>1</label>
    </ligand>
</feature>
<feature type="binding site" evidence="3">
    <location>
        <position position="78"/>
    </location>
    <ligand>
        <name>Zn(2+)</name>
        <dbReference type="ChEBI" id="CHEBI:29105"/>
        <label>1</label>
    </ligand>
</feature>
<feature type="binding site" evidence="3">
    <location>
        <position position="86"/>
    </location>
    <ligand>
        <name>Zn(2+)</name>
        <dbReference type="ChEBI" id="CHEBI:29105"/>
        <label>2</label>
    </ligand>
</feature>
<feature type="binding site" evidence="3">
    <location>
        <position position="90"/>
    </location>
    <ligand>
        <name>Zn(2+)</name>
        <dbReference type="ChEBI" id="CHEBI:29105"/>
        <label>2</label>
    </ligand>
</feature>
<feature type="binding site" evidence="4">
    <location>
        <position position="137"/>
    </location>
    <ligand>
        <name>S-adenosyl-L-methionine</name>
        <dbReference type="ChEBI" id="CHEBI:59789"/>
    </ligand>
</feature>
<feature type="binding site" evidence="1">
    <location>
        <begin position="206"/>
        <end position="207"/>
    </location>
    <ligand>
        <name>S-adenosyl-L-methionine</name>
        <dbReference type="ChEBI" id="CHEBI:59789"/>
    </ligand>
</feature>
<feature type="binding site" evidence="1">
    <location>
        <begin position="258"/>
        <end position="260"/>
    </location>
    <ligand>
        <name>S-adenosyl-L-methionine</name>
        <dbReference type="ChEBI" id="CHEBI:59789"/>
    </ligand>
</feature>
<keyword id="KW-0156">Chromatin regulator</keyword>
<keyword id="KW-0963">Cytoplasm</keyword>
<keyword id="KW-0479">Metal-binding</keyword>
<keyword id="KW-0489">Methyltransferase</keyword>
<keyword id="KW-0539">Nucleus</keyword>
<keyword id="KW-1185">Reference proteome</keyword>
<keyword id="KW-0949">S-adenosyl-L-methionine</keyword>
<keyword id="KW-0804">Transcription</keyword>
<keyword id="KW-0805">Transcription regulation</keyword>
<keyword id="KW-0808">Transferase</keyword>
<keyword id="KW-0862">Zinc</keyword>
<keyword id="KW-0863">Zinc-finger</keyword>
<name>SMYD2_BOVIN</name>
<comment type="function">
    <text evidence="2">Protein-lysine N-methyltransferase that methylates both histones and non-histone proteins, including p53/TP53 and RB1. Specifically trimethylates histone H3 'Lys-4' (H3K4me3) in vivo. The activity requires interaction with HSP90alpha. Shows even higher methyltransferase activity on p53/TP53. Monomethylates 'Lys-370' of p53/TP53, leading to decreased DNA-binding activity and subsequent transcriptional regulation activity of p53/TP53. Monomethylates RB1 at 'Lys-860'.</text>
</comment>
<comment type="catalytic activity">
    <reaction evidence="2">
        <text>L-lysyl(4)-[histone H3] + 3 S-adenosyl-L-methionine = N(6),N(6),N(6)-trimethyl-L-lysyl(4)-[histone H3] + 3 S-adenosyl-L-homocysteine + 3 H(+)</text>
        <dbReference type="Rhea" id="RHEA:60260"/>
        <dbReference type="Rhea" id="RHEA-COMP:15537"/>
        <dbReference type="Rhea" id="RHEA-COMP:15547"/>
        <dbReference type="ChEBI" id="CHEBI:15378"/>
        <dbReference type="ChEBI" id="CHEBI:29969"/>
        <dbReference type="ChEBI" id="CHEBI:57856"/>
        <dbReference type="ChEBI" id="CHEBI:59789"/>
        <dbReference type="ChEBI" id="CHEBI:61961"/>
        <dbReference type="EC" id="2.1.1.354"/>
    </reaction>
</comment>
<comment type="catalytic activity">
    <reaction evidence="2">
        <text>L-lysyl-[protein] + S-adenosyl-L-methionine = N(6)-methyl-L-lysyl-[protein] + S-adenosyl-L-homocysteine + H(+)</text>
        <dbReference type="Rhea" id="RHEA:51736"/>
        <dbReference type="Rhea" id="RHEA-COMP:9752"/>
        <dbReference type="Rhea" id="RHEA-COMP:13053"/>
        <dbReference type="ChEBI" id="CHEBI:15378"/>
        <dbReference type="ChEBI" id="CHEBI:29969"/>
        <dbReference type="ChEBI" id="CHEBI:57856"/>
        <dbReference type="ChEBI" id="CHEBI:59789"/>
        <dbReference type="ChEBI" id="CHEBI:61929"/>
    </reaction>
</comment>
<comment type="subunit">
    <text evidence="1">Interacts with RNA polymerase II and HELZ. Interacts with SIN3A and HDAC1. Interacts (via MYND-type zinc finger) with EPB41L3. Interacts (via SET domain) with p53/TP53. Interacts with RB1 and HSP90AA1 (By similarity).</text>
</comment>
<comment type="subcellular location">
    <subcellularLocation>
        <location evidence="1">Cytoplasm</location>
        <location evidence="1">Cytosol</location>
    </subcellularLocation>
    <subcellularLocation>
        <location evidence="1">Nucleus</location>
    </subcellularLocation>
</comment>
<comment type="similarity">
    <text evidence="4">Belongs to the class V-like SAM-binding methyltransferase superfamily.</text>
</comment>
<reference key="1">
    <citation type="submission" date="2006-08" db="EMBL/GenBank/DDBJ databases">
        <authorList>
            <consortium name="NIH - Mammalian Gene Collection (MGC) project"/>
        </authorList>
    </citation>
    <scope>NUCLEOTIDE SEQUENCE [LARGE SCALE MRNA]</scope>
    <source>
        <strain>Hereford</strain>
        <tissue>Brain cortex</tissue>
    </source>
</reference>
<accession>Q0P585</accession>